<name>CRUM1_MOUSE</name>
<proteinExistence type="evidence at protein level"/>
<comment type="function">
    <text evidence="8 10">Plays a role in photoreceptor morphogenesis in the retina (PubMed:12915475). May maintain cell polarization and adhesion (PubMed:15316081).</text>
</comment>
<comment type="function">
    <molecule>Isoform 3</molecule>
    <text evidence="9">May play a role in epidermal tissue morphogenesis (PubMed:14684155). May function in cell attachment for stratified epithelial organization (PubMed:14684155).</text>
</comment>
<comment type="subunit">
    <text evidence="2 10">Component of a complex composed of PALS1, CRB1 and EPB41L5 (By similarity). Within the complex, interacts (via intracellular domain) with PALS1 and EPB41L5 (via FERM domain) (By similarity). Forms a complex with MPP4 and PALS1 (PubMed:15316081). Interacts with MPDZ/MUPP1 and MPP4 (PubMed:15316081).</text>
</comment>
<comment type="subcellular location">
    <molecule>Isoform 1</molecule>
    <subcellularLocation>
        <location evidence="7">Apical cell membrane</location>
        <topology evidence="3">Single-pass type I membrane protein</topology>
    </subcellularLocation>
    <subcellularLocation>
        <location evidence="16">Secreted</location>
    </subcellularLocation>
    <subcellularLocation>
        <location evidence="7">Cell projection</location>
        <location evidence="7">Cilium</location>
        <location evidence="7">Photoreceptor outer segment</location>
    </subcellularLocation>
    <subcellularLocation>
        <location evidence="7">Photoreceptor inner segment</location>
    </subcellularLocation>
</comment>
<comment type="subcellular location">
    <molecule>Isoform 3</molecule>
    <subcellularLocation>
        <location evidence="9">Secreted</location>
    </subcellularLocation>
    <subcellularLocation>
        <location evidence="9">Cytoplasm</location>
    </subcellularLocation>
    <subcellularLocation>
        <location evidence="9">Cell junction</location>
        <location evidence="9">Focal adhesion</location>
    </subcellularLocation>
    <text evidence="9">Found in the cytoplasmic area of undifferentiated keratinocytes and associated with the plasma membrane at the site of cell-cell contacts and focal adhesion upon keratinocytes differentiation.</text>
</comment>
<comment type="alternative products">
    <event type="alternative splicing"/>
    <isoform>
        <id>Q8VHS2-1</id>
        <name>1</name>
        <sequence type="displayed"/>
    </isoform>
    <isoform>
        <id>Q8VHS2-2</id>
        <name>2</name>
        <sequence type="described" ref="VSP_014731 VSP_014735 VSP_014736"/>
    </isoform>
    <isoform>
        <id>Q8VHS2-3</id>
        <name>3</name>
        <name evidence="13">Crb1s</name>
        <sequence type="described" ref="VSP_014733 VSP_014734"/>
    </isoform>
    <isoform>
        <id>Q8VHS2-4</id>
        <name>4</name>
        <sequence type="described" ref="VSP_014730 VSP_014732 VSP_014733 VSP_014734"/>
    </isoform>
</comment>
<comment type="tissue specificity">
    <molecule>Isoform 1</molecule>
    <text evidence="6 8 9 10 12">Expressed in the kidney, lung, stomach and testis (PubMed:14684155). Expressed in the brain (PubMed:11744384, PubMed:14684155). Expressed in the retina of the eye (PubMed:11744384, PubMed:14684155, PubMed:26404741). Expressed in the outer nuclear layer, photoreceptor layer and inner nuclear layer of the retina (PubMed:11744384). Expressed in Mueller cell radial processes in the inner nuclear layer, in apical processes sclerad to the external limiting membrane, and in the subapical region, adjacent to the adherens junction of retinal photoreceptors (PubMed:12915475, PubMed:15316081). In the brain, expressed in the granular layer of the cerebellum, the hippocampal dentate gyrus, the olfactory bulbs, the subventricular region lining the telencephalic ventricles and the rostral migratory stream (PubMed:11744384).</text>
</comment>
<comment type="tissue specificity">
    <molecule>Isoform 3</molecule>
    <text evidence="9">Ubiquitously expressed.</text>
</comment>
<comment type="developmental stage">
    <text evidence="6 11">Primarily detected in the central nervous system at 10.5 dpc, in the ventral part of the neural tube including the ventral spinal cord, the ventral part of the mesencephalon, the mammillary and the hypothalamic regions, the optic area and the zona limitans intrathalamica (PubMed:11744384). Expressed by the V3 interneurons placed between the floor plate and the motorneurons all along the spinal cord axis (PubMed:11744384). In late embryogenesis, expressed mainly in ventral neural structures of the developing brain, including the mammillary, tuberalis regions of the hypothalamus and the preoptic area (PubMed:11744384). Starting from 12.5 dpc, also strongly expressed in the neural area that gives rise to the dorsal thalamus (PubMed:11744384). In the retina, expression starts at 11.5 dpc and is enhanced at 12.5, 14.5 and 16.5 dpc (PubMed:11744384). Expressed in the subapical region of the neuroepithelial layer of the retina at 17.5 dpc (PubMed:23001562). In postnatal stages, abundant expression in photoreceptors and also found in the inner nuclear layer and iris (PubMed:11744384).</text>
</comment>
<comment type="developmental stage">
    <molecule>Isoform 3</molecule>
    <text evidence="9">Expression first detected at 14 dpc, expression is enhanced at 15 and 16 dpc during active proliferation of epidermal cells, decreases after birth, but is maintained in adult skin (PubMed:14684155). Detected in the skin basal cells at 16 dpc, it was observed in upper layers after birth (at protein level) (PubMed:14684155).</text>
</comment>
<comment type="PTM">
    <text evidence="2">Glycosylated.</text>
</comment>
<comment type="disease">
    <text evidence="8">Defects in Crb1 are a cause of focal retinal dysplasia and degeneration associated with a shortening of inner and outer segments. Affected mice produce a secreted truncated protein that lacks the single transmembrane and the intracellular domain, and develop irregularities at the outer limiting membrane and loss of photoreceptor cells.</text>
</comment>
<comment type="similarity">
    <text evidence="16">Belongs to the Crumbs protein family.</text>
</comment>
<keyword id="KW-0025">Alternative splicing</keyword>
<keyword id="KW-0106">Calcium</keyword>
<keyword id="KW-0965">Cell junction</keyword>
<keyword id="KW-1003">Cell membrane</keyword>
<keyword id="KW-0966">Cell projection</keyword>
<keyword id="KW-0963">Cytoplasm</keyword>
<keyword id="KW-1015">Disulfide bond</keyword>
<keyword id="KW-0245">EGF-like domain</keyword>
<keyword id="KW-0325">Glycoprotein</keyword>
<keyword id="KW-0472">Membrane</keyword>
<keyword id="KW-1185">Reference proteome</keyword>
<keyword id="KW-0677">Repeat</keyword>
<keyword id="KW-0964">Secreted</keyword>
<keyword id="KW-0732">Signal</keyword>
<keyword id="KW-0812">Transmembrane</keyword>
<keyword id="KW-1133">Transmembrane helix</keyword>
<evidence type="ECO:0000250" key="1"/>
<evidence type="ECO:0000250" key="2">
    <source>
        <dbReference type="UniProtKB" id="P82279"/>
    </source>
</evidence>
<evidence type="ECO:0000255" key="3"/>
<evidence type="ECO:0000255" key="4">
    <source>
        <dbReference type="PROSITE-ProRule" id="PRU00076"/>
    </source>
</evidence>
<evidence type="ECO:0000255" key="5">
    <source>
        <dbReference type="PROSITE-ProRule" id="PRU00122"/>
    </source>
</evidence>
<evidence type="ECO:0000269" key="6">
    <source>
    </source>
</evidence>
<evidence type="ECO:0000269" key="7">
    <source>
    </source>
</evidence>
<evidence type="ECO:0000269" key="8">
    <source>
    </source>
</evidence>
<evidence type="ECO:0000269" key="9">
    <source>
    </source>
</evidence>
<evidence type="ECO:0000269" key="10">
    <source>
    </source>
</evidence>
<evidence type="ECO:0000269" key="11">
    <source>
    </source>
</evidence>
<evidence type="ECO:0000269" key="12">
    <source>
    </source>
</evidence>
<evidence type="ECO:0000303" key="13">
    <source>
    </source>
</evidence>
<evidence type="ECO:0000303" key="14">
    <source>
    </source>
</evidence>
<evidence type="ECO:0000303" key="15">
    <source ref="3"/>
</evidence>
<evidence type="ECO:0000305" key="16"/>
<reference key="1">
    <citation type="journal article" date="2002" name="Mech. Dev.">
        <title>Isolation of Crb1, a mouse homologue of Drosophila crumbs, and analysis of its expression pattern in eye and brain.</title>
        <authorList>
            <person name="den Hollander A.I."/>
            <person name="Ghiani M."/>
            <person name="de Kok Y.J.M."/>
            <person name="Wijnholds J."/>
            <person name="Ballabio A."/>
            <person name="Cremers F.P.M."/>
            <person name="Broccoli V."/>
        </authorList>
    </citation>
    <scope>NUCLEOTIDE SEQUENCE [MRNA] (ISOFORM 1)</scope>
    <scope>TISSUE SPECIFICITY</scope>
    <scope>DEVELOPMENTAL STAGE</scope>
    <source>
        <tissue>Eye</tissue>
    </source>
</reference>
<reference key="2">
    <citation type="journal article" date="2004" name="Biochem. Biophys. Res. Commun.">
        <title>Expression of a novel secretory form (Crb1s) of mouse Crumbs homologue Crb1 in skin development.</title>
        <authorList>
            <person name="Watanabe T."/>
            <person name="Miyatani S."/>
            <person name="Katoh I."/>
            <person name="Kobayashi S."/>
            <person name="Ikawa Y."/>
        </authorList>
    </citation>
    <scope>NUCLEOTIDE SEQUENCE [MRNA] (ISOFORM 3)</scope>
    <scope>TISSUE SPECIFICITY</scope>
    <scope>DEVELOPMENTAL STAGE</scope>
    <scope>FUNCTION</scope>
    <scope>SUBCELLULAR LOCATION</scope>
    <source>
        <strain>ICR</strain>
        <tissue>Skin</tissue>
    </source>
</reference>
<reference key="3">
    <citation type="submission" date="2002-03" db="EMBL/GenBank/DDBJ databases">
        <title>Mouse Crumbs-2 in developing nervous system.</title>
        <authorList>
            <person name="Chang C.-H."/>
            <person name="Fan S.-S."/>
        </authorList>
    </citation>
    <scope>NUCLEOTIDE SEQUENCE [MRNA] (ISOFORM 2)</scope>
    <source>
        <strain>ICR</strain>
    </source>
</reference>
<reference key="4">
    <citation type="journal article" date="2005" name="Science">
        <title>The transcriptional landscape of the mammalian genome.</title>
        <authorList>
            <person name="Carninci P."/>
            <person name="Kasukawa T."/>
            <person name="Katayama S."/>
            <person name="Gough J."/>
            <person name="Frith M.C."/>
            <person name="Maeda N."/>
            <person name="Oyama R."/>
            <person name="Ravasi T."/>
            <person name="Lenhard B."/>
            <person name="Wells C."/>
            <person name="Kodzius R."/>
            <person name="Shimokawa K."/>
            <person name="Bajic V.B."/>
            <person name="Brenner S.E."/>
            <person name="Batalov S."/>
            <person name="Forrest A.R."/>
            <person name="Zavolan M."/>
            <person name="Davis M.J."/>
            <person name="Wilming L.G."/>
            <person name="Aidinis V."/>
            <person name="Allen J.E."/>
            <person name="Ambesi-Impiombato A."/>
            <person name="Apweiler R."/>
            <person name="Aturaliya R.N."/>
            <person name="Bailey T.L."/>
            <person name="Bansal M."/>
            <person name="Baxter L."/>
            <person name="Beisel K.W."/>
            <person name="Bersano T."/>
            <person name="Bono H."/>
            <person name="Chalk A.M."/>
            <person name="Chiu K.P."/>
            <person name="Choudhary V."/>
            <person name="Christoffels A."/>
            <person name="Clutterbuck D.R."/>
            <person name="Crowe M.L."/>
            <person name="Dalla E."/>
            <person name="Dalrymple B.P."/>
            <person name="de Bono B."/>
            <person name="Della Gatta G."/>
            <person name="di Bernardo D."/>
            <person name="Down T."/>
            <person name="Engstrom P."/>
            <person name="Fagiolini M."/>
            <person name="Faulkner G."/>
            <person name="Fletcher C.F."/>
            <person name="Fukushima T."/>
            <person name="Furuno M."/>
            <person name="Futaki S."/>
            <person name="Gariboldi M."/>
            <person name="Georgii-Hemming P."/>
            <person name="Gingeras T.R."/>
            <person name="Gojobori T."/>
            <person name="Green R.E."/>
            <person name="Gustincich S."/>
            <person name="Harbers M."/>
            <person name="Hayashi Y."/>
            <person name="Hensch T.K."/>
            <person name="Hirokawa N."/>
            <person name="Hill D."/>
            <person name="Huminiecki L."/>
            <person name="Iacono M."/>
            <person name="Ikeo K."/>
            <person name="Iwama A."/>
            <person name="Ishikawa T."/>
            <person name="Jakt M."/>
            <person name="Kanapin A."/>
            <person name="Katoh M."/>
            <person name="Kawasawa Y."/>
            <person name="Kelso J."/>
            <person name="Kitamura H."/>
            <person name="Kitano H."/>
            <person name="Kollias G."/>
            <person name="Krishnan S.P."/>
            <person name="Kruger A."/>
            <person name="Kummerfeld S.K."/>
            <person name="Kurochkin I.V."/>
            <person name="Lareau L.F."/>
            <person name="Lazarevic D."/>
            <person name="Lipovich L."/>
            <person name="Liu J."/>
            <person name="Liuni S."/>
            <person name="McWilliam S."/>
            <person name="Madan Babu M."/>
            <person name="Madera M."/>
            <person name="Marchionni L."/>
            <person name="Matsuda H."/>
            <person name="Matsuzawa S."/>
            <person name="Miki H."/>
            <person name="Mignone F."/>
            <person name="Miyake S."/>
            <person name="Morris K."/>
            <person name="Mottagui-Tabar S."/>
            <person name="Mulder N."/>
            <person name="Nakano N."/>
            <person name="Nakauchi H."/>
            <person name="Ng P."/>
            <person name="Nilsson R."/>
            <person name="Nishiguchi S."/>
            <person name="Nishikawa S."/>
            <person name="Nori F."/>
            <person name="Ohara O."/>
            <person name="Okazaki Y."/>
            <person name="Orlando V."/>
            <person name="Pang K.C."/>
            <person name="Pavan W.J."/>
            <person name="Pavesi G."/>
            <person name="Pesole G."/>
            <person name="Petrovsky N."/>
            <person name="Piazza S."/>
            <person name="Reed J."/>
            <person name="Reid J.F."/>
            <person name="Ring B.Z."/>
            <person name="Ringwald M."/>
            <person name="Rost B."/>
            <person name="Ruan Y."/>
            <person name="Salzberg S.L."/>
            <person name="Sandelin A."/>
            <person name="Schneider C."/>
            <person name="Schoenbach C."/>
            <person name="Sekiguchi K."/>
            <person name="Semple C.A."/>
            <person name="Seno S."/>
            <person name="Sessa L."/>
            <person name="Sheng Y."/>
            <person name="Shibata Y."/>
            <person name="Shimada H."/>
            <person name="Shimada K."/>
            <person name="Silva D."/>
            <person name="Sinclair B."/>
            <person name="Sperling S."/>
            <person name="Stupka E."/>
            <person name="Sugiura K."/>
            <person name="Sultana R."/>
            <person name="Takenaka Y."/>
            <person name="Taki K."/>
            <person name="Tammoja K."/>
            <person name="Tan S.L."/>
            <person name="Tang S."/>
            <person name="Taylor M.S."/>
            <person name="Tegner J."/>
            <person name="Teichmann S.A."/>
            <person name="Ueda H.R."/>
            <person name="van Nimwegen E."/>
            <person name="Verardo R."/>
            <person name="Wei C.L."/>
            <person name="Yagi K."/>
            <person name="Yamanishi H."/>
            <person name="Zabarovsky E."/>
            <person name="Zhu S."/>
            <person name="Zimmer A."/>
            <person name="Hide W."/>
            <person name="Bult C."/>
            <person name="Grimmond S.M."/>
            <person name="Teasdale R.D."/>
            <person name="Liu E.T."/>
            <person name="Brusic V."/>
            <person name="Quackenbush J."/>
            <person name="Wahlestedt C."/>
            <person name="Mattick J.S."/>
            <person name="Hume D.A."/>
            <person name="Kai C."/>
            <person name="Sasaki D."/>
            <person name="Tomaru Y."/>
            <person name="Fukuda S."/>
            <person name="Kanamori-Katayama M."/>
            <person name="Suzuki M."/>
            <person name="Aoki J."/>
            <person name="Arakawa T."/>
            <person name="Iida J."/>
            <person name="Imamura K."/>
            <person name="Itoh M."/>
            <person name="Kato T."/>
            <person name="Kawaji H."/>
            <person name="Kawagashira N."/>
            <person name="Kawashima T."/>
            <person name="Kojima M."/>
            <person name="Kondo S."/>
            <person name="Konno H."/>
            <person name="Nakano K."/>
            <person name="Ninomiya N."/>
            <person name="Nishio T."/>
            <person name="Okada M."/>
            <person name="Plessy C."/>
            <person name="Shibata K."/>
            <person name="Shiraki T."/>
            <person name="Suzuki S."/>
            <person name="Tagami M."/>
            <person name="Waki K."/>
            <person name="Watahiki A."/>
            <person name="Okamura-Oho Y."/>
            <person name="Suzuki H."/>
            <person name="Kawai J."/>
            <person name="Hayashizaki Y."/>
        </authorList>
    </citation>
    <scope>NUCLEOTIDE SEQUENCE [LARGE SCALE MRNA] (ISOFORM 4)</scope>
    <source>
        <strain>C57BL/6J</strain>
        <tissue>Retina</tissue>
    </source>
</reference>
<reference key="5">
    <citation type="journal article" date="2009" name="PLoS Biol.">
        <title>Lineage-specific biology revealed by a finished genome assembly of the mouse.</title>
        <authorList>
            <person name="Church D.M."/>
            <person name="Goodstadt L."/>
            <person name="Hillier L.W."/>
            <person name="Zody M.C."/>
            <person name="Goldstein S."/>
            <person name="She X."/>
            <person name="Bult C.J."/>
            <person name="Agarwala R."/>
            <person name="Cherry J.L."/>
            <person name="DiCuccio M."/>
            <person name="Hlavina W."/>
            <person name="Kapustin Y."/>
            <person name="Meric P."/>
            <person name="Maglott D."/>
            <person name="Birtle Z."/>
            <person name="Marques A.C."/>
            <person name="Graves T."/>
            <person name="Zhou S."/>
            <person name="Teague B."/>
            <person name="Potamousis K."/>
            <person name="Churas C."/>
            <person name="Place M."/>
            <person name="Herschleb J."/>
            <person name="Runnheim R."/>
            <person name="Forrest D."/>
            <person name="Amos-Landgraf J."/>
            <person name="Schwartz D.C."/>
            <person name="Cheng Z."/>
            <person name="Lindblad-Toh K."/>
            <person name="Eichler E.E."/>
            <person name="Ponting C.P."/>
        </authorList>
    </citation>
    <scope>NUCLEOTIDE SEQUENCE [LARGE SCALE GENOMIC DNA]</scope>
    <source>
        <strain>C57BL/6J</strain>
    </source>
</reference>
<reference key="6">
    <citation type="submission" date="2005-09" db="EMBL/GenBank/DDBJ databases">
        <authorList>
            <person name="Mural R.J."/>
            <person name="Adams M.D."/>
            <person name="Myers E.W."/>
            <person name="Smith H.O."/>
            <person name="Venter J.C."/>
        </authorList>
    </citation>
    <scope>NUCLEOTIDE SEQUENCE [LARGE SCALE GENOMIC DNA]</scope>
</reference>
<reference key="7">
    <citation type="journal article" date="2002" name="Nature">
        <title>Crumbs, the Drosophila homologue of human CRB1/RP12, is essential for photoreceptor morphogenesis.</title>
        <authorList>
            <person name="Pellikka M."/>
            <person name="Tanentzapf G."/>
            <person name="Pinto M."/>
            <person name="Smith C."/>
            <person name="McGlade C.J."/>
            <person name="Ready D.F."/>
            <person name="Tepass U."/>
        </authorList>
    </citation>
    <scope>SUBCELLULAR LOCATION</scope>
</reference>
<reference key="8">
    <citation type="journal article" date="2003" name="Hum. Mol. Genet.">
        <title>CRB1 is essential for external limiting membrane integrity and photoreceptor morphogenesis in the mammalian retina.</title>
        <authorList>
            <person name="Mehalow A.K."/>
            <person name="Kameya S."/>
            <person name="Smith R.S."/>
            <person name="Hawes N.L."/>
            <person name="Denegre J.M."/>
            <person name="Young J.A."/>
            <person name="Bechtold L."/>
            <person name="Haider N.B."/>
            <person name="Tepass U."/>
            <person name="Heckenlively J.R."/>
            <person name="Chang B."/>
            <person name="Naggert J.K."/>
            <person name="Nishina P.M."/>
        </authorList>
    </citation>
    <scope>FUNCTION</scope>
    <scope>TISSUE SPECIFICITY</scope>
    <scope>DISEASE</scope>
</reference>
<reference key="9">
    <citation type="journal article" date="2004" name="J. Cell Sci.">
        <title>Crumbs homologue 1 is required for maintenance of photoreceptor cell polarization and adhesion during light exposure.</title>
        <authorList>
            <person name="van de Pavert S.A."/>
            <person name="Kantardzhieva A."/>
            <person name="Malysheva A."/>
            <person name="Meuleman J."/>
            <person name="Versteeg I."/>
            <person name="Levelt C."/>
            <person name="Klooster J."/>
            <person name="Geiger S."/>
            <person name="Seeliger M.W."/>
            <person name="Rashbass P."/>
            <person name="Le Bivic A."/>
            <person name="Wijnholds J."/>
        </authorList>
    </citation>
    <scope>FUNCTION</scope>
    <scope>IDENTIFICATION IN COMPLEX WITH MPDZ; MPP4 AND PALS1</scope>
    <scope>TISSUE SPECIFICITY</scope>
</reference>
<reference key="10">
    <citation type="journal article" date="2013" name="Hum. Mol. Genet.">
        <title>Loss of CRB2 in the mouse retina mimics human retinitis pigmentosa due to mutations in the CRB1 gene.</title>
        <authorList>
            <person name="Alves C.H."/>
            <person name="Sanz A.S."/>
            <person name="Park B."/>
            <person name="Pellissier L.P."/>
            <person name="Tanimoto N."/>
            <person name="Beck S.C."/>
            <person name="Huber G."/>
            <person name="Murtaza M."/>
            <person name="Richard F."/>
            <person name="Sridevi Gurubaran I."/>
            <person name="Garcia Garrido M."/>
            <person name="Levelt C.N."/>
            <person name="Rashbass P."/>
            <person name="Le Bivic A."/>
            <person name="Seeliger M.W."/>
            <person name="Wijnholds J."/>
        </authorList>
    </citation>
    <scope>DEVELOPMENTAL STAGE</scope>
</reference>
<reference key="11">
    <citation type="journal article" date="2015" name="Sci. Rep.">
        <title>CRB2 completes a fully expressed Crumbs complex in the Retinal Pigment Epithelium.</title>
        <authorList>
            <person name="Paniagua A.E."/>
            <person name="Herranz-Martin S."/>
            <person name="Jimeno D."/>
            <person name="Jimeno A.M."/>
            <person name="Lopez-Benito S."/>
            <person name="Carlos Arevalo J."/>
            <person name="Velasco A."/>
            <person name="Aijon J."/>
            <person name="Lillo C."/>
        </authorList>
    </citation>
    <scope>TISSUE SPECIFICITY</scope>
</reference>
<feature type="signal peptide" evidence="3">
    <location>
        <begin position="1"/>
        <end position="27"/>
    </location>
</feature>
<feature type="chain" id="PRO_0000007501" description="Protein crumbs homolog 1">
    <location>
        <begin position="28"/>
        <end position="1405"/>
    </location>
</feature>
<feature type="topological domain" description="Extracellular" evidence="3">
    <location>
        <begin position="28"/>
        <end position="1339"/>
    </location>
</feature>
<feature type="transmembrane region" description="Helical" evidence="3">
    <location>
        <begin position="1340"/>
        <end position="1360"/>
    </location>
</feature>
<feature type="topological domain" description="Cytoplasmic" evidence="3">
    <location>
        <begin position="1361"/>
        <end position="1405"/>
    </location>
</feature>
<feature type="domain" description="EGF-like 1; atypical" evidence="4">
    <location>
        <begin position="30"/>
        <end position="67"/>
    </location>
</feature>
<feature type="domain" description="EGF-like 2" evidence="4">
    <location>
        <begin position="69"/>
        <end position="107"/>
    </location>
</feature>
<feature type="domain" description="EGF-like 3" evidence="4">
    <location>
        <begin position="109"/>
        <end position="145"/>
    </location>
</feature>
<feature type="domain" description="EGF-like 4; calcium-binding" evidence="4">
    <location>
        <begin position="147"/>
        <end position="183"/>
    </location>
</feature>
<feature type="domain" description="EGF-like 5; calcium-binding" evidence="4">
    <location>
        <begin position="185"/>
        <end position="221"/>
    </location>
</feature>
<feature type="domain" description="EGF-like 6; calcium-binding" evidence="4">
    <location>
        <begin position="223"/>
        <end position="259"/>
    </location>
</feature>
<feature type="domain" description="EGF-like 7" evidence="4">
    <location>
        <begin position="261"/>
        <end position="298"/>
    </location>
</feature>
<feature type="domain" description="EGF-like 8" evidence="4">
    <location>
        <begin position="300"/>
        <end position="336"/>
    </location>
</feature>
<feature type="domain" description="EGF-like 9" evidence="4">
    <location>
        <begin position="338"/>
        <end position="394"/>
    </location>
</feature>
<feature type="domain" description="EGF-like 10" evidence="4">
    <location>
        <begin position="396"/>
        <end position="438"/>
    </location>
</feature>
<feature type="domain" description="EGF-like 11" evidence="4">
    <location>
        <begin position="440"/>
        <end position="480"/>
    </location>
</feature>
<feature type="domain" description="Laminin G-like 1" evidence="5">
    <location>
        <begin position="482"/>
        <end position="669"/>
    </location>
</feature>
<feature type="domain" description="EGF-like 12" evidence="4">
    <location>
        <begin position="671"/>
        <end position="707"/>
    </location>
</feature>
<feature type="domain" description="Laminin G-like 2" evidence="5">
    <location>
        <begin position="713"/>
        <end position="884"/>
    </location>
</feature>
<feature type="domain" description="EGF-like 13" evidence="4">
    <location>
        <begin position="886"/>
        <end position="922"/>
    </location>
</feature>
<feature type="domain" description="EGF-like 14" evidence="4">
    <location>
        <begin position="923"/>
        <end position="959"/>
    </location>
</feature>
<feature type="domain" description="Laminin G-like 3" evidence="5">
    <location>
        <begin position="950"/>
        <end position="1136"/>
    </location>
</feature>
<feature type="domain" description="EGF-like 15" evidence="4">
    <location>
        <begin position="1138"/>
        <end position="1174"/>
    </location>
</feature>
<feature type="domain" description="EGF-like 16; calcium-binding" evidence="4">
    <location>
        <begin position="1176"/>
        <end position="1211"/>
    </location>
</feature>
<feature type="domain" description="EGF-like 17" evidence="4">
    <location>
        <begin position="1213"/>
        <end position="1249"/>
    </location>
</feature>
<feature type="domain" description="EGF-like 18" evidence="4">
    <location>
        <begin position="1254"/>
        <end position="1294"/>
    </location>
</feature>
<feature type="domain" description="EGF-like 19; calcium-binding" evidence="4">
    <location>
        <begin position="1296"/>
        <end position="1332"/>
    </location>
</feature>
<feature type="glycosylation site" description="N-linked (GlcNAc...) asparagine" evidence="3">
    <location>
        <position position="41"/>
    </location>
</feature>
<feature type="glycosylation site" description="N-linked (GlcNAc...) asparagine" evidence="3">
    <location>
        <position position="560"/>
    </location>
</feature>
<feature type="glycosylation site" description="N-linked (GlcNAc...) asparagine" evidence="3">
    <location>
        <position position="656"/>
    </location>
</feature>
<feature type="glycosylation site" description="N-linked (GlcNAc...) asparagine" evidence="3">
    <location>
        <position position="756"/>
    </location>
</feature>
<feature type="glycosylation site" description="N-linked (GlcNAc...) asparagine" evidence="3">
    <location>
        <position position="879"/>
    </location>
</feature>
<feature type="glycosylation site" description="N-linked (GlcNAc...) asparagine" evidence="3">
    <location>
        <position position="967"/>
    </location>
</feature>
<feature type="glycosylation site" description="N-linked (GlcNAc...) asparagine" evidence="3">
    <location>
        <position position="974"/>
    </location>
</feature>
<feature type="glycosylation site" description="N-linked (GlcNAc...) asparagine" evidence="3">
    <location>
        <position position="999"/>
    </location>
</feature>
<feature type="glycosylation site" description="N-linked (GlcNAc...) asparagine" evidence="3">
    <location>
        <position position="1189"/>
    </location>
</feature>
<feature type="glycosylation site" description="N-linked (GlcNAc...) asparagine" evidence="3">
    <location>
        <position position="1242"/>
    </location>
</feature>
<feature type="glycosylation site" description="N-linked (GlcNAc...) asparagine" evidence="3">
    <location>
        <position position="1264"/>
    </location>
</feature>
<feature type="disulfide bond" evidence="1">
    <location>
        <begin position="34"/>
        <end position="45"/>
    </location>
</feature>
<feature type="disulfide bond" evidence="1">
    <location>
        <begin position="39"/>
        <end position="54"/>
    </location>
</feature>
<feature type="disulfide bond" evidence="1">
    <location>
        <begin position="55"/>
        <end position="66"/>
    </location>
</feature>
<feature type="disulfide bond" evidence="1">
    <location>
        <begin position="73"/>
        <end position="84"/>
    </location>
</feature>
<feature type="disulfide bond" evidence="1">
    <location>
        <begin position="78"/>
        <end position="95"/>
    </location>
</feature>
<feature type="disulfide bond" evidence="1">
    <location>
        <begin position="97"/>
        <end position="106"/>
    </location>
</feature>
<feature type="disulfide bond" evidence="1">
    <location>
        <begin position="113"/>
        <end position="124"/>
    </location>
</feature>
<feature type="disulfide bond" evidence="1">
    <location>
        <begin position="118"/>
        <end position="133"/>
    </location>
</feature>
<feature type="disulfide bond" evidence="1">
    <location>
        <begin position="135"/>
        <end position="144"/>
    </location>
</feature>
<feature type="disulfide bond" evidence="1">
    <location>
        <begin position="151"/>
        <end position="162"/>
    </location>
</feature>
<feature type="disulfide bond" evidence="1">
    <location>
        <begin position="156"/>
        <end position="171"/>
    </location>
</feature>
<feature type="disulfide bond" evidence="1">
    <location>
        <begin position="173"/>
        <end position="182"/>
    </location>
</feature>
<feature type="disulfide bond" evidence="1">
    <location>
        <begin position="189"/>
        <end position="200"/>
    </location>
</feature>
<feature type="disulfide bond" evidence="1">
    <location>
        <begin position="194"/>
        <end position="209"/>
    </location>
</feature>
<feature type="disulfide bond" evidence="1">
    <location>
        <begin position="211"/>
        <end position="220"/>
    </location>
</feature>
<feature type="disulfide bond" evidence="1">
    <location>
        <begin position="227"/>
        <end position="238"/>
    </location>
</feature>
<feature type="disulfide bond" evidence="1">
    <location>
        <begin position="232"/>
        <end position="247"/>
    </location>
</feature>
<feature type="disulfide bond" evidence="1">
    <location>
        <begin position="249"/>
        <end position="258"/>
    </location>
</feature>
<feature type="disulfide bond" evidence="1">
    <location>
        <begin position="265"/>
        <end position="276"/>
    </location>
</feature>
<feature type="disulfide bond" evidence="1">
    <location>
        <begin position="270"/>
        <end position="285"/>
    </location>
</feature>
<feature type="disulfide bond" evidence="1">
    <location>
        <begin position="287"/>
        <end position="297"/>
    </location>
</feature>
<feature type="disulfide bond" evidence="1">
    <location>
        <begin position="304"/>
        <end position="315"/>
    </location>
</feature>
<feature type="disulfide bond" evidence="1">
    <location>
        <begin position="309"/>
        <end position="324"/>
    </location>
</feature>
<feature type="disulfide bond" evidence="1">
    <location>
        <begin position="326"/>
        <end position="335"/>
    </location>
</feature>
<feature type="disulfide bond" evidence="1">
    <location>
        <begin position="342"/>
        <end position="353"/>
    </location>
</feature>
<feature type="disulfide bond" evidence="1">
    <location>
        <begin position="347"/>
        <end position="382"/>
    </location>
</feature>
<feature type="disulfide bond" evidence="1">
    <location>
        <begin position="384"/>
        <end position="393"/>
    </location>
</feature>
<feature type="disulfide bond" evidence="1">
    <location>
        <begin position="400"/>
        <end position="411"/>
    </location>
</feature>
<feature type="disulfide bond" evidence="1">
    <location>
        <begin position="405"/>
        <end position="420"/>
    </location>
</feature>
<feature type="disulfide bond" evidence="1">
    <location>
        <begin position="422"/>
        <end position="437"/>
    </location>
</feature>
<feature type="disulfide bond" evidence="1">
    <location>
        <begin position="444"/>
        <end position="455"/>
    </location>
</feature>
<feature type="disulfide bond" evidence="1">
    <location>
        <begin position="449"/>
        <end position="468"/>
    </location>
</feature>
<feature type="disulfide bond" evidence="1">
    <location>
        <begin position="470"/>
        <end position="479"/>
    </location>
</feature>
<feature type="disulfide bond" evidence="1">
    <location>
        <begin position="641"/>
        <end position="669"/>
    </location>
</feature>
<feature type="disulfide bond" evidence="1">
    <location>
        <begin position="675"/>
        <end position="686"/>
    </location>
</feature>
<feature type="disulfide bond" evidence="1">
    <location>
        <begin position="680"/>
        <end position="695"/>
    </location>
</feature>
<feature type="disulfide bond" evidence="1">
    <location>
        <begin position="697"/>
        <end position="706"/>
    </location>
</feature>
<feature type="disulfide bond" evidence="1">
    <location>
        <begin position="850"/>
        <end position="884"/>
    </location>
</feature>
<feature type="disulfide bond" evidence="1">
    <location>
        <begin position="890"/>
        <end position="901"/>
    </location>
</feature>
<feature type="disulfide bond" evidence="1">
    <location>
        <begin position="895"/>
        <end position="910"/>
    </location>
</feature>
<feature type="disulfide bond" evidence="1">
    <location>
        <begin position="912"/>
        <end position="921"/>
    </location>
</feature>
<feature type="disulfide bond" evidence="1">
    <location>
        <begin position="927"/>
        <end position="938"/>
    </location>
</feature>
<feature type="disulfide bond" evidence="1">
    <location>
        <begin position="932"/>
        <end position="947"/>
    </location>
</feature>
<feature type="disulfide bond" evidence="1">
    <location>
        <begin position="1095"/>
        <end position="1136"/>
    </location>
</feature>
<feature type="disulfide bond" evidence="1">
    <location>
        <begin position="1142"/>
        <end position="1153"/>
    </location>
</feature>
<feature type="disulfide bond" evidence="1">
    <location>
        <begin position="1147"/>
        <end position="1162"/>
    </location>
</feature>
<feature type="disulfide bond" evidence="1">
    <location>
        <begin position="1164"/>
        <end position="1173"/>
    </location>
</feature>
<feature type="disulfide bond" evidence="1">
    <location>
        <begin position="1180"/>
        <end position="1190"/>
    </location>
</feature>
<feature type="disulfide bond" evidence="1">
    <location>
        <begin position="1185"/>
        <end position="1199"/>
    </location>
</feature>
<feature type="disulfide bond" evidence="1">
    <location>
        <begin position="1201"/>
        <end position="1210"/>
    </location>
</feature>
<feature type="disulfide bond" evidence="1">
    <location>
        <begin position="1217"/>
        <end position="1228"/>
    </location>
</feature>
<feature type="disulfide bond" evidence="1">
    <location>
        <begin position="1222"/>
        <end position="1237"/>
    </location>
</feature>
<feature type="disulfide bond" evidence="1">
    <location>
        <begin position="1239"/>
        <end position="1248"/>
    </location>
</feature>
<feature type="disulfide bond" evidence="1">
    <location>
        <begin position="1258"/>
        <end position="1273"/>
    </location>
</feature>
<feature type="disulfide bond" evidence="1">
    <location>
        <begin position="1267"/>
        <end position="1282"/>
    </location>
</feature>
<feature type="disulfide bond" evidence="1">
    <location>
        <begin position="1284"/>
        <end position="1293"/>
    </location>
</feature>
<feature type="disulfide bond" evidence="1">
    <location>
        <begin position="1300"/>
        <end position="1311"/>
    </location>
</feature>
<feature type="disulfide bond" evidence="1">
    <location>
        <begin position="1305"/>
        <end position="1320"/>
    </location>
</feature>
<feature type="disulfide bond" evidence="1">
    <location>
        <begin position="1322"/>
        <end position="1331"/>
    </location>
</feature>
<feature type="splice variant" id="VSP_014730" description="In isoform 4." evidence="14">
    <location>
        <begin position="1"/>
        <end position="372"/>
    </location>
</feature>
<feature type="splice variant" id="VSP_014731" description="In isoform 2." evidence="15">
    <location>
        <begin position="329"/>
        <end position="389"/>
    </location>
</feature>
<feature type="splice variant" id="VSP_014732" description="In isoform 4." evidence="14">
    <original>SYVGASGYVCICQPGFT</original>
    <variation>MFGHKTQGFHILMAVLI</variation>
    <location>
        <begin position="373"/>
        <end position="389"/>
    </location>
</feature>
<feature type="splice variant" id="VSP_014733" description="In isoform 3 and isoform 4." evidence="13 14">
    <original>EYVAGRFGQDDSTGYAAFSVNDNYGQNFSLSMFVRTRQPLGLLLALENSTYQY</original>
    <variation>GERSGVPQSAVPLSRAISNHPGCRPLLGNIRTPQDLCWYLFTNEIKWHSHDMY</variation>
    <location>
        <begin position="709"/>
        <end position="761"/>
    </location>
</feature>
<feature type="splice variant" id="VSP_014734" description="In isoform 3 and isoform 4." evidence="13 14">
    <location>
        <begin position="762"/>
        <end position="1405"/>
    </location>
</feature>
<feature type="splice variant" id="VSP_014735" description="In isoform 2." evidence="15">
    <original>NECASDPCINGGLCRDLVNRFLCICDVAFAGERCELDLADDRLLGIFTAVGSGTLALFFILLLAGVASLIASNKRATQG</original>
    <variation>EASVPPIPASMEDCAGTWSTGSYASVMWPSLGERCELDVSGLSFYVSLLLWQNLFQLLSYLVLHMNDEPVVEWGAQENY</variation>
    <location>
        <begin position="1298"/>
        <end position="1376"/>
    </location>
</feature>
<feature type="splice variant" id="VSP_014736" description="In isoform 2." evidence="15">
    <location>
        <begin position="1377"/>
        <end position="1405"/>
    </location>
</feature>
<feature type="sequence conflict" description="In Ref. 1; AAL65131 and 2; AAR20495." evidence="16" ref="1 2">
    <original>K</original>
    <variation>E</variation>
    <location>
        <position position="46"/>
    </location>
</feature>
<feature type="sequence conflict" description="In Ref. 1; AAL65131." evidence="16" ref="1">
    <original>H</original>
    <variation>L</variation>
    <location>
        <position position="157"/>
    </location>
</feature>
<feature type="sequence conflict" description="In Ref. 2; AAR20495." evidence="16" ref="2">
    <original>E</original>
    <variation>K</variation>
    <location>
        <position position="214"/>
    </location>
</feature>
<feature type="sequence conflict" description="In Ref. 2; AAR20495." evidence="16" ref="2">
    <original>S</original>
    <variation>T</variation>
    <location>
        <position position="261"/>
    </location>
</feature>
<feature type="sequence conflict" description="In Ref. 2; AAR20495." evidence="16" ref="2">
    <original>S</original>
    <variation>N</variation>
    <location>
        <position position="344"/>
    </location>
</feature>
<feature type="sequence conflict" description="In Ref. 2; AAR20495." evidence="16" ref="2">
    <original>S</original>
    <variation>T</variation>
    <location>
        <position position="371"/>
    </location>
</feature>
<feature type="sequence conflict" description="In Ref. 1; AAL65131." evidence="16" ref="1">
    <original>N</original>
    <variation>S</variation>
    <location>
        <position position="413"/>
    </location>
</feature>
<feature type="sequence conflict" description="In Ref. 2; AAR20495." evidence="16" ref="2">
    <location>
        <position position="521"/>
    </location>
</feature>
<feature type="sequence conflict" description="In Ref. 3; AAQ06606." evidence="16" ref="3">
    <original>L</original>
    <variation>W</variation>
    <location>
        <position position="536"/>
    </location>
</feature>
<feature type="sequence conflict" description="In Ref. 3; AAQ06606." evidence="16" ref="3">
    <original>C</original>
    <variation>G</variation>
    <location>
        <position position="540"/>
    </location>
</feature>
<feature type="sequence conflict" description="In Ref. 3; AAQ06606." evidence="16" ref="3">
    <original>I</original>
    <variation>M</variation>
    <location>
        <position position="545"/>
    </location>
</feature>
<feature type="sequence conflict" description="In Ref. 3; AAQ06606." evidence="16" ref="3">
    <original>T</original>
    <variation>P</variation>
    <location>
        <position position="572"/>
    </location>
</feature>
<feature type="sequence conflict" description="In Ref. 3; AAQ06606." evidence="16" ref="3">
    <original>T</original>
    <variation>A</variation>
    <location>
        <position position="591"/>
    </location>
</feature>
<feature type="sequence conflict" description="In Ref. 2; AAR20495." evidence="16" ref="2">
    <original>D</original>
    <variation>DD</variation>
    <location>
        <position position="673"/>
    </location>
</feature>
<feature type="sequence conflict" description="In Ref. 3; AAQ06606." evidence="16" ref="3">
    <original>F</original>
    <variation>L</variation>
    <location>
        <position position="741"/>
    </location>
</feature>
<feature type="sequence conflict" description="In Ref. 3; AAQ06606." evidence="16" ref="3">
    <original>R</original>
    <variation>H</variation>
    <location>
        <position position="745"/>
    </location>
</feature>
<feature type="sequence conflict" description="In Ref. 3; AAQ06606." evidence="16" ref="3">
    <original>P</original>
    <variation>L</variation>
    <location>
        <position position="835"/>
    </location>
</feature>
<feature type="sequence conflict" description="In Ref. 3; AAQ06606." evidence="16" ref="3">
    <original>G</original>
    <variation>R</variation>
    <location>
        <position position="886"/>
    </location>
</feature>
<feature type="sequence conflict" description="In Ref. 3; AAQ06606." evidence="16" ref="3">
    <original>VCH</original>
    <variation>ACR</variation>
    <location>
        <begin position="900"/>
        <end position="902"/>
    </location>
</feature>
<feature type="sequence conflict" description="In Ref. 3; AAQ06606." evidence="16" ref="3">
    <original>P</original>
    <variation>S</variation>
    <location>
        <position position="942"/>
    </location>
</feature>
<feature type="sequence conflict" description="In Ref. 3; AAQ06606." evidence="16" ref="3">
    <original>H</original>
    <variation>Q</variation>
    <location>
        <position position="982"/>
    </location>
</feature>
<feature type="sequence conflict" description="In Ref. 3; AAQ06606." evidence="16" ref="3">
    <original>I</original>
    <variation>V</variation>
    <location>
        <position position="1062"/>
    </location>
</feature>
<feature type="sequence conflict" description="In Ref. 3; AAQ06606." evidence="16" ref="3">
    <original>M</original>
    <variation>V</variation>
    <location>
        <position position="1275"/>
    </location>
</feature>
<sequence length="1405" mass="153350">MKLKRTAYLLFLYLSSSLLICIKNSFCNKNNTRCLSGPCQNNSTCKHFPQDNNCCLDTANNLDKDCEDLKDPCFSSPCQGIATCVKIPGEGNFLCQCPPGYSGLNCETATNSCGGNLCQHGGTCRKDPEHPVCICPPGYAGRFCETDHNECASSPCHNGAMCQDGINGYSCFCVPGYQGRHCDLEVDECVSDPCKNEAVCLNEIGRYTCVCPQEFSGVNCELEIDECRSQPCLHGATCQDAPGGYSCDCAPGFLGEHCELSVNECESQPCLHGGLCVDGRNSYHCDCTGSGFTGMHCESLIPLCWSKPCHNDATCEDTVDSYICHCRPGYTGALCETDINECSSNPCQFWGECVELSSEGLYGNTAGLPSSFSYVGASGYVCICQPGFTGIHCEEDVDECLLHPCLNGGTCENLPGNYACHCPFDDTSRTFYGGENCSEILLGCTHHQCLNNGKCIPHFQNGQHGFTCQCLSGYAGPLCETVTTLSFGSNGFLWVTSGSHTGIGPECNISLRFHTVQPNALLLIRGNKDVSMKLELLNGCVHLSIEVWNQLKVLLSISHNTSDGEWHFVEVTIAETLTLALVGGSCKEKCTTKSSVPVENHQSICALQDSFLGGLPMGTANNSVSVLNIYNVPSTPSFVGCLQDIRFDLNHITLENVSSGLSSNVKAGCLGKDWCESQPCQNRGRCINLWQGYQCECDRPYTGSNCLKEYVAGRFGQDDSTGYAAFSVNDNYGQNFSLSMFVRTRQPLGLLLALENSTYQYVSVWLEHGSLALQTPGSPKFMVNFFLSDGNVHLISLRIKPNEIELYQSSQNLGFISVPTWTIRRGDVIFIGGLPDREKTEVYGGFFKGCVQDVRLNSQTLEFFPNSTNNAYDDPILVNVTQGCPGDNTCKSNPCHNGGVCHSLWDDFSCSCPTNTAGRACEQVQWCQLSPCPPTAECQLLPQGFECIANAVFSGLSREILFRSNGNITRELTNITFAFRTHDTNVMILHAEKEPEFLNISIQDARLFFQLRSGNSFYTLHLMGSQLVNDGTWHQVTFSMIDPVAQTSRWQMEVNDQTPFVISEVATGSLNFLKDNTDIYVGDQSVDNPKGLQGCLSTIEIGGIYLSYFENLHGFPGKPQEEQFLKVSTNMVLTGCLPSNACHSSPCLHGGNCEDSYSSYRCACLSGWSGTHCEINIDECFSSPCIHGNCSDGVAAYHCRCEPGYTGVNCEVDVDNCKSHQCANGATCVPEAHGYSCLCFGNFTGRFCRHSRLPSTVCGNEKRNFTCYNGGSCSMFQEDWQCMCWPGFTGEWCEEDINECASDPCINGGLCRDLVNRFLCICDVAFAGERCELDLADDRLLGIFTAVGSGTLALFFILLLAGVASLIASNKRATQGTYSPSGQEKAGPRVEMWIRMPPPALERLI</sequence>
<accession>Q8VHS2</accession>
<accession>B7ZC63</accession>
<accession>Q6ST50</accession>
<accession>Q71JF2</accession>
<accession>Q8BGR4</accession>
<organism>
    <name type="scientific">Mus musculus</name>
    <name type="common">Mouse</name>
    <dbReference type="NCBI Taxonomy" id="10090"/>
    <lineage>
        <taxon>Eukaryota</taxon>
        <taxon>Metazoa</taxon>
        <taxon>Chordata</taxon>
        <taxon>Craniata</taxon>
        <taxon>Vertebrata</taxon>
        <taxon>Euteleostomi</taxon>
        <taxon>Mammalia</taxon>
        <taxon>Eutheria</taxon>
        <taxon>Euarchontoglires</taxon>
        <taxon>Glires</taxon>
        <taxon>Rodentia</taxon>
        <taxon>Myomorpha</taxon>
        <taxon>Muroidea</taxon>
        <taxon>Muridae</taxon>
        <taxon>Murinae</taxon>
        <taxon>Mus</taxon>
        <taxon>Mus</taxon>
    </lineage>
</organism>
<protein>
    <recommendedName>
        <fullName>Protein crumbs homolog 1</fullName>
    </recommendedName>
</protein>
<dbReference type="EMBL" id="AF406641">
    <property type="protein sequence ID" value="AAL65131.1"/>
    <property type="molecule type" value="mRNA"/>
</dbReference>
<dbReference type="EMBL" id="AY450552">
    <property type="protein sequence ID" value="AAR20495.1"/>
    <property type="molecule type" value="mRNA"/>
</dbReference>
<dbReference type="EMBL" id="AF492496">
    <property type="protein sequence ID" value="AAQ06606.1"/>
    <property type="molecule type" value="mRNA"/>
</dbReference>
<dbReference type="EMBL" id="AK044345">
    <property type="protein sequence ID" value="BAC31879.1"/>
    <property type="molecule type" value="mRNA"/>
</dbReference>
<dbReference type="EMBL" id="AK044704">
    <property type="protein sequence ID" value="BAC32041.1"/>
    <property type="molecule type" value="mRNA"/>
</dbReference>
<dbReference type="EMBL" id="AC116810">
    <property type="status" value="NOT_ANNOTATED_CDS"/>
    <property type="molecule type" value="Genomic_DNA"/>
</dbReference>
<dbReference type="EMBL" id="AC138741">
    <property type="status" value="NOT_ANNOTATED_CDS"/>
    <property type="molecule type" value="Genomic_DNA"/>
</dbReference>
<dbReference type="EMBL" id="AL606536">
    <property type="status" value="NOT_ANNOTATED_CDS"/>
    <property type="molecule type" value="Genomic_DNA"/>
</dbReference>
<dbReference type="EMBL" id="CH466520">
    <property type="protein sequence ID" value="EDL39531.1"/>
    <property type="molecule type" value="Genomic_DNA"/>
</dbReference>
<dbReference type="CCDS" id="CCDS15336.1">
    <molecule id="Q8VHS2-1"/>
</dbReference>
<dbReference type="RefSeq" id="NP_573502.2">
    <molecule id="Q8VHS2-1"/>
    <property type="nucleotide sequence ID" value="NM_133239.2"/>
</dbReference>
<dbReference type="SMR" id="Q8VHS2"/>
<dbReference type="BioGRID" id="228439">
    <property type="interactions" value="3"/>
</dbReference>
<dbReference type="CORUM" id="Q8VHS2"/>
<dbReference type="FunCoup" id="Q8VHS2">
    <property type="interactions" value="284"/>
</dbReference>
<dbReference type="STRING" id="10090.ENSMUSP00000060769"/>
<dbReference type="GlyCosmos" id="Q8VHS2">
    <property type="glycosylation" value="11 sites, No reported glycans"/>
</dbReference>
<dbReference type="GlyGen" id="Q8VHS2">
    <property type="glycosylation" value="13 sites, 3 N-linked glycans (3 sites)"/>
</dbReference>
<dbReference type="iPTMnet" id="Q8VHS2"/>
<dbReference type="PhosphoSitePlus" id="Q8VHS2"/>
<dbReference type="PaxDb" id="10090-ENSMUSP00000060769"/>
<dbReference type="Antibodypedia" id="34478">
    <property type="antibodies" value="66 antibodies from 24 providers"/>
</dbReference>
<dbReference type="DNASU" id="170788"/>
<dbReference type="Ensembl" id="ENSMUST00000059825.12">
    <molecule id="Q8VHS2-1"/>
    <property type="protein sequence ID" value="ENSMUSP00000060769.6"/>
    <property type="gene ID" value="ENSMUSG00000063681.15"/>
</dbReference>
<dbReference type="Ensembl" id="ENSMUST00000196402.5">
    <molecule id="Q8VHS2-3"/>
    <property type="protein sequence ID" value="ENSMUSP00000142702.2"/>
    <property type="gene ID" value="ENSMUSG00000063681.15"/>
</dbReference>
<dbReference type="GeneID" id="170788"/>
<dbReference type="KEGG" id="mmu:170788"/>
<dbReference type="UCSC" id="uc007cwc.1">
    <molecule id="Q8VHS2-1"/>
    <property type="organism name" value="mouse"/>
</dbReference>
<dbReference type="UCSC" id="uc007cwe.1">
    <molecule id="Q8VHS2-4"/>
    <property type="organism name" value="mouse"/>
</dbReference>
<dbReference type="UCSC" id="uc007cwf.1">
    <molecule id="Q8VHS2-3"/>
    <property type="organism name" value="mouse"/>
</dbReference>
<dbReference type="AGR" id="MGI:2136343"/>
<dbReference type="CTD" id="23418"/>
<dbReference type="MGI" id="MGI:2136343">
    <property type="gene designation" value="Crb1"/>
</dbReference>
<dbReference type="VEuPathDB" id="HostDB:ENSMUSG00000063681"/>
<dbReference type="eggNOG" id="KOG1217">
    <property type="taxonomic scope" value="Eukaryota"/>
</dbReference>
<dbReference type="GeneTree" id="ENSGT00940000155152"/>
<dbReference type="HOGENOM" id="CLU_000827_2_2_1"/>
<dbReference type="InParanoid" id="Q8VHS2"/>
<dbReference type="OMA" id="RDMFIML"/>
<dbReference type="OrthoDB" id="22262at9989"/>
<dbReference type="PhylomeDB" id="Q8VHS2"/>
<dbReference type="TreeFam" id="TF316224"/>
<dbReference type="BioGRID-ORCS" id="170788">
    <property type="hits" value="1 hit in 75 CRISPR screens"/>
</dbReference>
<dbReference type="PRO" id="PR:Q8VHS2"/>
<dbReference type="Proteomes" id="UP000000589">
    <property type="component" value="Chromosome 1"/>
</dbReference>
<dbReference type="RNAct" id="Q8VHS2">
    <property type="molecule type" value="protein"/>
</dbReference>
<dbReference type="Bgee" id="ENSMUSG00000063681">
    <property type="expression patterns" value="Expressed in retinal neural layer and 89 other cell types or tissues"/>
</dbReference>
<dbReference type="ExpressionAtlas" id="Q8VHS2">
    <property type="expression patterns" value="baseline and differential"/>
</dbReference>
<dbReference type="GO" id="GO:0005912">
    <property type="term" value="C:adherens junction"/>
    <property type="evidence" value="ECO:0000314"/>
    <property type="project" value="MGI"/>
</dbReference>
<dbReference type="GO" id="GO:0043296">
    <property type="term" value="C:apical junction complex"/>
    <property type="evidence" value="ECO:0000314"/>
    <property type="project" value="MGI"/>
</dbReference>
<dbReference type="GO" id="GO:0045177">
    <property type="term" value="C:apical part of cell"/>
    <property type="evidence" value="ECO:0000314"/>
    <property type="project" value="MGI"/>
</dbReference>
<dbReference type="GO" id="GO:0016324">
    <property type="term" value="C:apical plasma membrane"/>
    <property type="evidence" value="ECO:0007669"/>
    <property type="project" value="UniProtKB-SubCell"/>
</dbReference>
<dbReference type="GO" id="GO:0005911">
    <property type="term" value="C:cell-cell junction"/>
    <property type="evidence" value="ECO:0000314"/>
    <property type="project" value="MGI"/>
</dbReference>
<dbReference type="GO" id="GO:0005737">
    <property type="term" value="C:cytoplasm"/>
    <property type="evidence" value="ECO:0007669"/>
    <property type="project" value="UniProtKB-SubCell"/>
</dbReference>
<dbReference type="GO" id="GO:0005576">
    <property type="term" value="C:extracellular region"/>
    <property type="evidence" value="ECO:0007669"/>
    <property type="project" value="UniProtKB-SubCell"/>
</dbReference>
<dbReference type="GO" id="GO:0005925">
    <property type="term" value="C:focal adhesion"/>
    <property type="evidence" value="ECO:0007669"/>
    <property type="project" value="UniProtKB-SubCell"/>
</dbReference>
<dbReference type="GO" id="GO:0097386">
    <property type="term" value="C:glial cell projection"/>
    <property type="evidence" value="ECO:0000314"/>
    <property type="project" value="MGI"/>
</dbReference>
<dbReference type="GO" id="GO:0005902">
    <property type="term" value="C:microvillus"/>
    <property type="evidence" value="ECO:0000314"/>
    <property type="project" value="MGI"/>
</dbReference>
<dbReference type="GO" id="GO:0001917">
    <property type="term" value="C:photoreceptor inner segment"/>
    <property type="evidence" value="ECO:0007669"/>
    <property type="project" value="UniProtKB-SubCell"/>
</dbReference>
<dbReference type="GO" id="GO:0001750">
    <property type="term" value="C:photoreceptor outer segment"/>
    <property type="evidence" value="ECO:0000314"/>
    <property type="project" value="MGI"/>
</dbReference>
<dbReference type="GO" id="GO:0005886">
    <property type="term" value="C:plasma membrane"/>
    <property type="evidence" value="ECO:0000314"/>
    <property type="project" value="MGI"/>
</dbReference>
<dbReference type="GO" id="GO:0035003">
    <property type="term" value="C:subapical complex"/>
    <property type="evidence" value="ECO:0000314"/>
    <property type="project" value="MGI"/>
</dbReference>
<dbReference type="GO" id="GO:0005509">
    <property type="term" value="F:calcium ion binding"/>
    <property type="evidence" value="ECO:0007669"/>
    <property type="project" value="InterPro"/>
</dbReference>
<dbReference type="GO" id="GO:0001974">
    <property type="term" value="P:blood vessel remodeling"/>
    <property type="evidence" value="ECO:0000315"/>
    <property type="project" value="MGI"/>
</dbReference>
<dbReference type="GO" id="GO:0071482">
    <property type="term" value="P:cellular response to light stimulus"/>
    <property type="evidence" value="ECO:0000315"/>
    <property type="project" value="MGI"/>
</dbReference>
<dbReference type="GO" id="GO:0050908">
    <property type="term" value="P:detection of light stimulus involved in visual perception"/>
    <property type="evidence" value="ECO:0000315"/>
    <property type="project" value="MGI"/>
</dbReference>
<dbReference type="GO" id="GO:0061159">
    <property type="term" value="P:establishment of bipolar cell polarity involved in cell morphogenesis"/>
    <property type="evidence" value="ECO:0000315"/>
    <property type="project" value="MGI"/>
</dbReference>
<dbReference type="GO" id="GO:0042462">
    <property type="term" value="P:eye photoreceptor cell development"/>
    <property type="evidence" value="ECO:0000315"/>
    <property type="project" value="MGI"/>
</dbReference>
<dbReference type="GO" id="GO:0010467">
    <property type="term" value="P:gene expression"/>
    <property type="evidence" value="ECO:0000315"/>
    <property type="project" value="MGI"/>
</dbReference>
<dbReference type="GO" id="GO:0010001">
    <property type="term" value="P:glial cell differentiation"/>
    <property type="evidence" value="ECO:0000315"/>
    <property type="project" value="MGI"/>
</dbReference>
<dbReference type="GO" id="GO:0061024">
    <property type="term" value="P:membrane organization"/>
    <property type="evidence" value="ECO:0000315"/>
    <property type="project" value="MGI"/>
</dbReference>
<dbReference type="GO" id="GO:0045494">
    <property type="term" value="P:photoreceptor cell maintenance"/>
    <property type="evidence" value="ECO:0000315"/>
    <property type="project" value="MGI"/>
</dbReference>
<dbReference type="GO" id="GO:0035845">
    <property type="term" value="P:photoreceptor cell outer segment organization"/>
    <property type="evidence" value="ECO:0000315"/>
    <property type="project" value="MGI"/>
</dbReference>
<dbReference type="GO" id="GO:0007009">
    <property type="term" value="P:plasma membrane organization"/>
    <property type="evidence" value="ECO:0000315"/>
    <property type="project" value="MGI"/>
</dbReference>
<dbReference type="GO" id="GO:0060060">
    <property type="term" value="P:post-embryonic retina morphogenesis in camera-type eye"/>
    <property type="evidence" value="ECO:0000315"/>
    <property type="project" value="MGI"/>
</dbReference>
<dbReference type="GO" id="GO:0008104">
    <property type="term" value="P:protein localization"/>
    <property type="evidence" value="ECO:0000315"/>
    <property type="project" value="MGI"/>
</dbReference>
<dbReference type="GO" id="GO:0060041">
    <property type="term" value="P:retina development in camera-type eye"/>
    <property type="evidence" value="ECO:0000315"/>
    <property type="project" value="MGI"/>
</dbReference>
<dbReference type="GO" id="GO:0010842">
    <property type="term" value="P:retina layer formation"/>
    <property type="evidence" value="ECO:0000315"/>
    <property type="project" value="MGI"/>
</dbReference>
<dbReference type="GO" id="GO:0060042">
    <property type="term" value="P:retina morphogenesis in camera-type eye"/>
    <property type="evidence" value="ECO:0000315"/>
    <property type="project" value="MGI"/>
</dbReference>
<dbReference type="GO" id="GO:0007601">
    <property type="term" value="P:visual perception"/>
    <property type="evidence" value="ECO:0000315"/>
    <property type="project" value="MGI"/>
</dbReference>
<dbReference type="CDD" id="cd00054">
    <property type="entry name" value="EGF_CA"/>
    <property type="match status" value="16"/>
</dbReference>
<dbReference type="CDD" id="cd00110">
    <property type="entry name" value="LamG"/>
    <property type="match status" value="3"/>
</dbReference>
<dbReference type="FunFam" id="2.10.25.10:FF:000348">
    <property type="entry name" value="Crumbs 1, cell polarity complex component"/>
    <property type="match status" value="1"/>
</dbReference>
<dbReference type="FunFam" id="2.10.25.10:FF:000484">
    <property type="entry name" value="Crumbs 1, cell polarity complex component"/>
    <property type="match status" value="1"/>
</dbReference>
<dbReference type="FunFam" id="2.10.25.10:FF:000517">
    <property type="entry name" value="Crumbs 1, cell polarity complex component"/>
    <property type="match status" value="1"/>
</dbReference>
<dbReference type="FunFam" id="2.60.120.200:FF:000081">
    <property type="entry name" value="Crumbs 1, cell polarity complex component"/>
    <property type="match status" value="1"/>
</dbReference>
<dbReference type="FunFam" id="2.10.25.10:FF:000208">
    <property type="entry name" value="Crumbs 2, cell polarity complex component"/>
    <property type="match status" value="1"/>
</dbReference>
<dbReference type="FunFam" id="2.10.25.10:FF:000039">
    <property type="entry name" value="Crumbs cell polarity complex component 1"/>
    <property type="match status" value="3"/>
</dbReference>
<dbReference type="FunFam" id="2.10.25.10:FF:000274">
    <property type="entry name" value="Crumbs cell polarity complex component 1"/>
    <property type="match status" value="1"/>
</dbReference>
<dbReference type="FunFam" id="2.10.25.10:FF:000400">
    <property type="entry name" value="Crumbs cell polarity complex component 1"/>
    <property type="match status" value="1"/>
</dbReference>
<dbReference type="FunFam" id="2.10.25.10:FF:000413">
    <property type="entry name" value="Crumbs cell polarity complex component 1"/>
    <property type="match status" value="1"/>
</dbReference>
<dbReference type="FunFam" id="2.10.25.10:FF:000468">
    <property type="entry name" value="Crumbs cell polarity complex component 1"/>
    <property type="match status" value="1"/>
</dbReference>
<dbReference type="FunFam" id="2.60.120.200:FF:000055">
    <property type="entry name" value="Crumbs cell polarity complex component 1"/>
    <property type="match status" value="1"/>
</dbReference>
<dbReference type="FunFam" id="2.60.120.200:FF:000090">
    <property type="entry name" value="Crumbs cell polarity complex component 1"/>
    <property type="match status" value="1"/>
</dbReference>
<dbReference type="FunFam" id="2.10.25.10:FF:000123">
    <property type="entry name" value="Crumbs homolog 1 (Drosophila)"/>
    <property type="match status" value="3"/>
</dbReference>
<dbReference type="FunFam" id="2.10.25.10:FF:000252">
    <property type="entry name" value="Crumbs homolog 1 (Drosophila)"/>
    <property type="match status" value="1"/>
</dbReference>
<dbReference type="FunFam" id="2.10.25.10:FF:000122">
    <property type="entry name" value="Protein crumbs homolog 2"/>
    <property type="match status" value="1"/>
</dbReference>
<dbReference type="FunFam" id="2.10.25.10:FF:000045">
    <property type="entry name" value="Slit guidance ligand 2"/>
    <property type="match status" value="1"/>
</dbReference>
<dbReference type="Gene3D" id="2.60.120.200">
    <property type="match status" value="3"/>
</dbReference>
<dbReference type="Gene3D" id="2.10.25.10">
    <property type="entry name" value="Laminin"/>
    <property type="match status" value="17"/>
</dbReference>
<dbReference type="InterPro" id="IPR013320">
    <property type="entry name" value="ConA-like_dom_sf"/>
</dbReference>
<dbReference type="InterPro" id="IPR001881">
    <property type="entry name" value="EGF-like_Ca-bd_dom"/>
</dbReference>
<dbReference type="InterPro" id="IPR013032">
    <property type="entry name" value="EGF-like_CS"/>
</dbReference>
<dbReference type="InterPro" id="IPR000742">
    <property type="entry name" value="EGF-like_dom"/>
</dbReference>
<dbReference type="InterPro" id="IPR000152">
    <property type="entry name" value="EGF-type_Asp/Asn_hydroxyl_site"/>
</dbReference>
<dbReference type="InterPro" id="IPR018097">
    <property type="entry name" value="EGF_Ca-bd_CS"/>
</dbReference>
<dbReference type="InterPro" id="IPR009030">
    <property type="entry name" value="Growth_fac_rcpt_cys_sf"/>
</dbReference>
<dbReference type="InterPro" id="IPR001791">
    <property type="entry name" value="Laminin_G"/>
</dbReference>
<dbReference type="InterPro" id="IPR051830">
    <property type="entry name" value="NOTCH_homolog"/>
</dbReference>
<dbReference type="PANTHER" id="PTHR24033">
    <property type="entry name" value="EGF-LIKE DOMAIN-CONTAINING PROTEIN"/>
    <property type="match status" value="1"/>
</dbReference>
<dbReference type="PANTHER" id="PTHR24033:SF151">
    <property type="entry name" value="NOTCH 2"/>
    <property type="match status" value="1"/>
</dbReference>
<dbReference type="Pfam" id="PF00008">
    <property type="entry name" value="EGF"/>
    <property type="match status" value="12"/>
</dbReference>
<dbReference type="Pfam" id="PF12661">
    <property type="entry name" value="hEGF"/>
    <property type="match status" value="2"/>
</dbReference>
<dbReference type="Pfam" id="PF02210">
    <property type="entry name" value="Laminin_G_2"/>
    <property type="match status" value="3"/>
</dbReference>
<dbReference type="PRINTS" id="PR00010">
    <property type="entry name" value="EGFBLOOD"/>
</dbReference>
<dbReference type="PRINTS" id="PR01983">
    <property type="entry name" value="NOTCH"/>
</dbReference>
<dbReference type="SMART" id="SM00181">
    <property type="entry name" value="EGF"/>
    <property type="match status" value="17"/>
</dbReference>
<dbReference type="SMART" id="SM00179">
    <property type="entry name" value="EGF_CA"/>
    <property type="match status" value="16"/>
</dbReference>
<dbReference type="SMART" id="SM00282">
    <property type="entry name" value="LamG"/>
    <property type="match status" value="3"/>
</dbReference>
<dbReference type="SUPFAM" id="SSF49899">
    <property type="entry name" value="Concanavalin A-like lectins/glucanases"/>
    <property type="match status" value="3"/>
</dbReference>
<dbReference type="SUPFAM" id="SSF57196">
    <property type="entry name" value="EGF/Laminin"/>
    <property type="match status" value="12"/>
</dbReference>
<dbReference type="SUPFAM" id="SSF57184">
    <property type="entry name" value="Growth factor receptor domain"/>
    <property type="match status" value="1"/>
</dbReference>
<dbReference type="PROSITE" id="PS00010">
    <property type="entry name" value="ASX_HYDROXYL"/>
    <property type="match status" value="10"/>
</dbReference>
<dbReference type="PROSITE" id="PS00022">
    <property type="entry name" value="EGF_1"/>
    <property type="match status" value="15"/>
</dbReference>
<dbReference type="PROSITE" id="PS01186">
    <property type="entry name" value="EGF_2"/>
    <property type="match status" value="11"/>
</dbReference>
<dbReference type="PROSITE" id="PS50026">
    <property type="entry name" value="EGF_3"/>
    <property type="match status" value="17"/>
</dbReference>
<dbReference type="PROSITE" id="PS01187">
    <property type="entry name" value="EGF_CA"/>
    <property type="match status" value="6"/>
</dbReference>
<dbReference type="PROSITE" id="PS50025">
    <property type="entry name" value="LAM_G_DOMAIN"/>
    <property type="match status" value="3"/>
</dbReference>
<gene>
    <name type="primary">Crb1</name>
</gene>